<gene>
    <name evidence="1" type="primary">rplB</name>
    <name type="ordered locus">Sde_0963</name>
</gene>
<proteinExistence type="inferred from homology"/>
<dbReference type="EMBL" id="CP000282">
    <property type="protein sequence ID" value="ABD80225.1"/>
    <property type="molecule type" value="Genomic_DNA"/>
</dbReference>
<dbReference type="RefSeq" id="WP_011467445.1">
    <property type="nucleotide sequence ID" value="NC_007912.1"/>
</dbReference>
<dbReference type="SMR" id="Q21M54"/>
<dbReference type="STRING" id="203122.Sde_0963"/>
<dbReference type="GeneID" id="98612648"/>
<dbReference type="KEGG" id="sde:Sde_0963"/>
<dbReference type="eggNOG" id="COG0090">
    <property type="taxonomic scope" value="Bacteria"/>
</dbReference>
<dbReference type="HOGENOM" id="CLU_036235_2_1_6"/>
<dbReference type="OrthoDB" id="9778722at2"/>
<dbReference type="Proteomes" id="UP000001947">
    <property type="component" value="Chromosome"/>
</dbReference>
<dbReference type="GO" id="GO:0015934">
    <property type="term" value="C:large ribosomal subunit"/>
    <property type="evidence" value="ECO:0007669"/>
    <property type="project" value="InterPro"/>
</dbReference>
<dbReference type="GO" id="GO:0019843">
    <property type="term" value="F:rRNA binding"/>
    <property type="evidence" value="ECO:0007669"/>
    <property type="project" value="UniProtKB-UniRule"/>
</dbReference>
<dbReference type="GO" id="GO:0003735">
    <property type="term" value="F:structural constituent of ribosome"/>
    <property type="evidence" value="ECO:0007669"/>
    <property type="project" value="InterPro"/>
</dbReference>
<dbReference type="GO" id="GO:0016740">
    <property type="term" value="F:transferase activity"/>
    <property type="evidence" value="ECO:0007669"/>
    <property type="project" value="InterPro"/>
</dbReference>
<dbReference type="GO" id="GO:0002181">
    <property type="term" value="P:cytoplasmic translation"/>
    <property type="evidence" value="ECO:0007669"/>
    <property type="project" value="TreeGrafter"/>
</dbReference>
<dbReference type="FunFam" id="2.30.30.30:FF:000001">
    <property type="entry name" value="50S ribosomal protein L2"/>
    <property type="match status" value="1"/>
</dbReference>
<dbReference type="FunFam" id="2.40.50.140:FF:000003">
    <property type="entry name" value="50S ribosomal protein L2"/>
    <property type="match status" value="1"/>
</dbReference>
<dbReference type="FunFam" id="4.10.950.10:FF:000001">
    <property type="entry name" value="50S ribosomal protein L2"/>
    <property type="match status" value="1"/>
</dbReference>
<dbReference type="Gene3D" id="2.30.30.30">
    <property type="match status" value="1"/>
</dbReference>
<dbReference type="Gene3D" id="2.40.50.140">
    <property type="entry name" value="Nucleic acid-binding proteins"/>
    <property type="match status" value="1"/>
</dbReference>
<dbReference type="Gene3D" id="4.10.950.10">
    <property type="entry name" value="Ribosomal protein L2, domain 3"/>
    <property type="match status" value="1"/>
</dbReference>
<dbReference type="HAMAP" id="MF_01320_B">
    <property type="entry name" value="Ribosomal_uL2_B"/>
    <property type="match status" value="1"/>
</dbReference>
<dbReference type="InterPro" id="IPR012340">
    <property type="entry name" value="NA-bd_OB-fold"/>
</dbReference>
<dbReference type="InterPro" id="IPR014722">
    <property type="entry name" value="Rib_uL2_dom2"/>
</dbReference>
<dbReference type="InterPro" id="IPR002171">
    <property type="entry name" value="Ribosomal_uL2"/>
</dbReference>
<dbReference type="InterPro" id="IPR005880">
    <property type="entry name" value="Ribosomal_uL2_bac/org-type"/>
</dbReference>
<dbReference type="InterPro" id="IPR022669">
    <property type="entry name" value="Ribosomal_uL2_C"/>
</dbReference>
<dbReference type="InterPro" id="IPR022671">
    <property type="entry name" value="Ribosomal_uL2_CS"/>
</dbReference>
<dbReference type="InterPro" id="IPR014726">
    <property type="entry name" value="Ribosomal_uL2_dom3"/>
</dbReference>
<dbReference type="InterPro" id="IPR022666">
    <property type="entry name" value="Ribosomal_uL2_RNA-bd_dom"/>
</dbReference>
<dbReference type="InterPro" id="IPR008991">
    <property type="entry name" value="Translation_prot_SH3-like_sf"/>
</dbReference>
<dbReference type="NCBIfam" id="TIGR01171">
    <property type="entry name" value="rplB_bact"/>
    <property type="match status" value="1"/>
</dbReference>
<dbReference type="PANTHER" id="PTHR13691:SF5">
    <property type="entry name" value="LARGE RIBOSOMAL SUBUNIT PROTEIN UL2M"/>
    <property type="match status" value="1"/>
</dbReference>
<dbReference type="PANTHER" id="PTHR13691">
    <property type="entry name" value="RIBOSOMAL PROTEIN L2"/>
    <property type="match status" value="1"/>
</dbReference>
<dbReference type="Pfam" id="PF00181">
    <property type="entry name" value="Ribosomal_L2"/>
    <property type="match status" value="1"/>
</dbReference>
<dbReference type="Pfam" id="PF03947">
    <property type="entry name" value="Ribosomal_L2_C"/>
    <property type="match status" value="1"/>
</dbReference>
<dbReference type="PIRSF" id="PIRSF002158">
    <property type="entry name" value="Ribosomal_L2"/>
    <property type="match status" value="1"/>
</dbReference>
<dbReference type="SMART" id="SM01383">
    <property type="entry name" value="Ribosomal_L2"/>
    <property type="match status" value="1"/>
</dbReference>
<dbReference type="SMART" id="SM01382">
    <property type="entry name" value="Ribosomal_L2_C"/>
    <property type="match status" value="1"/>
</dbReference>
<dbReference type="SUPFAM" id="SSF50249">
    <property type="entry name" value="Nucleic acid-binding proteins"/>
    <property type="match status" value="1"/>
</dbReference>
<dbReference type="SUPFAM" id="SSF50104">
    <property type="entry name" value="Translation proteins SH3-like domain"/>
    <property type="match status" value="1"/>
</dbReference>
<dbReference type="PROSITE" id="PS00467">
    <property type="entry name" value="RIBOSOMAL_L2"/>
    <property type="match status" value="1"/>
</dbReference>
<reference key="1">
    <citation type="journal article" date="2008" name="PLoS Genet.">
        <title>Complete genome sequence of the complex carbohydrate-degrading marine bacterium, Saccharophagus degradans strain 2-40 T.</title>
        <authorList>
            <person name="Weiner R.M."/>
            <person name="Taylor L.E. II"/>
            <person name="Henrissat B."/>
            <person name="Hauser L."/>
            <person name="Land M."/>
            <person name="Coutinho P.M."/>
            <person name="Rancurel C."/>
            <person name="Saunders E.H."/>
            <person name="Longmire A.G."/>
            <person name="Zhang H."/>
            <person name="Bayer E.A."/>
            <person name="Gilbert H.J."/>
            <person name="Larimer F."/>
            <person name="Zhulin I.B."/>
            <person name="Ekborg N.A."/>
            <person name="Lamed R."/>
            <person name="Richardson P.M."/>
            <person name="Borovok I."/>
            <person name="Hutcheson S."/>
        </authorList>
    </citation>
    <scope>NUCLEOTIDE SEQUENCE [LARGE SCALE GENOMIC DNA]</scope>
    <source>
        <strain>2-40 / ATCC 43961 / DSM 17024</strain>
    </source>
</reference>
<name>RL2_SACD2</name>
<feature type="chain" id="PRO_0000310006" description="Large ribosomal subunit protein uL2">
    <location>
        <begin position="1"/>
        <end position="275"/>
    </location>
</feature>
<feature type="region of interest" description="Disordered" evidence="2">
    <location>
        <begin position="28"/>
        <end position="54"/>
    </location>
</feature>
<feature type="region of interest" description="Disordered" evidence="2">
    <location>
        <begin position="223"/>
        <end position="275"/>
    </location>
</feature>
<sequence length="275" mass="30073">MPIVKRKPTSAGRRFVVNVVNADLHKGAPHAPLLEKKSKSGGRNNNGRITTRHIGGGHKQHYRVIDFRRNKDGIPAKVERLEYDPNRTAYIALVCYADGERRYIIAPKGVKAGDVIQSGDAAPIKPGNALPLRNIPVGSVVHCIEMKPGKGAQIARSAGTSVQLVAREGQYCTLRLRSGEMRKILSECRATLGEVSNSEHNLRSLGKAGASRWRGVRPTVRGVAMNPVDHPHGGGEGRTSGGRHPVSPWGTPTKGYKTRSNKRTDKMIVRRRNKK</sequence>
<accession>Q21M54</accession>
<keyword id="KW-1185">Reference proteome</keyword>
<keyword id="KW-0687">Ribonucleoprotein</keyword>
<keyword id="KW-0689">Ribosomal protein</keyword>
<keyword id="KW-0694">RNA-binding</keyword>
<keyword id="KW-0699">rRNA-binding</keyword>
<evidence type="ECO:0000255" key="1">
    <source>
        <dbReference type="HAMAP-Rule" id="MF_01320"/>
    </source>
</evidence>
<evidence type="ECO:0000256" key="2">
    <source>
        <dbReference type="SAM" id="MobiDB-lite"/>
    </source>
</evidence>
<evidence type="ECO:0000305" key="3"/>
<comment type="function">
    <text evidence="1">One of the primary rRNA binding proteins. Required for association of the 30S and 50S subunits to form the 70S ribosome, for tRNA binding and peptide bond formation. It has been suggested to have peptidyltransferase activity; this is somewhat controversial. Makes several contacts with the 16S rRNA in the 70S ribosome.</text>
</comment>
<comment type="subunit">
    <text evidence="1">Part of the 50S ribosomal subunit. Forms a bridge to the 30S subunit in the 70S ribosome.</text>
</comment>
<comment type="similarity">
    <text evidence="1">Belongs to the universal ribosomal protein uL2 family.</text>
</comment>
<organism>
    <name type="scientific">Saccharophagus degradans (strain 2-40 / ATCC 43961 / DSM 17024)</name>
    <dbReference type="NCBI Taxonomy" id="203122"/>
    <lineage>
        <taxon>Bacteria</taxon>
        <taxon>Pseudomonadati</taxon>
        <taxon>Pseudomonadota</taxon>
        <taxon>Gammaproteobacteria</taxon>
        <taxon>Cellvibrionales</taxon>
        <taxon>Cellvibrionaceae</taxon>
        <taxon>Saccharophagus</taxon>
    </lineage>
</organism>
<protein>
    <recommendedName>
        <fullName evidence="1">Large ribosomal subunit protein uL2</fullName>
    </recommendedName>
    <alternativeName>
        <fullName evidence="3">50S ribosomal protein L2</fullName>
    </alternativeName>
</protein>